<comment type="function">
    <text evidence="3">Binds L-arginine with high affinity. Shows no measurable affinity for L-ornithine.</text>
</comment>
<comment type="subcellular location">
    <subcellularLocation>
        <location evidence="6">Periplasm</location>
    </subcellularLocation>
</comment>
<comment type="induction">
    <text evidence="4">Part of the aot operon that encodes proteins involved in the uptake of arginine and ornithine. Expression of the aot operon is strongly induced by arginine, via the HTH-type transcriptional regulator ArgR.</text>
</comment>
<comment type="disruption phenotype">
    <text evidence="2 4">Deletion of the aotJQMOP genes greatly reduces arginine and ornithine uptake (PubMed:9791103). Disruption mutant has a reduced capacity to use arginine and ornithine as sole carbon source for growth (PubMed:18833300).</text>
</comment>
<comment type="similarity">
    <text evidence="6">Belongs to the bacterial solute-binding protein 3 family.</text>
</comment>
<dbReference type="EMBL" id="AE004091">
    <property type="protein sequence ID" value="AAG04277.1"/>
    <property type="molecule type" value="Genomic_DNA"/>
</dbReference>
<dbReference type="PIR" id="T44454">
    <property type="entry name" value="T44454"/>
</dbReference>
<dbReference type="RefSeq" id="NP_249579.1">
    <property type="nucleotide sequence ID" value="NC_002516.2"/>
</dbReference>
<dbReference type="RefSeq" id="WP_003085932.1">
    <property type="nucleotide sequence ID" value="NZ_QZGE01000007.1"/>
</dbReference>
<dbReference type="SMR" id="G3XD47"/>
<dbReference type="STRING" id="208964.PA0888"/>
<dbReference type="PaxDb" id="208964-PA0888"/>
<dbReference type="DNASU" id="879210"/>
<dbReference type="GeneID" id="879210"/>
<dbReference type="KEGG" id="pae:PA0888"/>
<dbReference type="PATRIC" id="fig|208964.12.peg.923"/>
<dbReference type="PseudoCAP" id="PA0888"/>
<dbReference type="HOGENOM" id="CLU_019602_18_0_6"/>
<dbReference type="InParanoid" id="G3XD47"/>
<dbReference type="OrthoDB" id="9768183at2"/>
<dbReference type="PhylomeDB" id="G3XD47"/>
<dbReference type="Proteomes" id="UP000002438">
    <property type="component" value="Chromosome"/>
</dbReference>
<dbReference type="GO" id="GO:0005615">
    <property type="term" value="C:extracellular space"/>
    <property type="evidence" value="ECO:0000314"/>
    <property type="project" value="PseudoCAP"/>
</dbReference>
<dbReference type="GO" id="GO:0030288">
    <property type="term" value="C:outer membrane-bounded periplasmic space"/>
    <property type="evidence" value="ECO:0000318"/>
    <property type="project" value="GO_Central"/>
</dbReference>
<dbReference type="GO" id="GO:0016597">
    <property type="term" value="F:amino acid binding"/>
    <property type="evidence" value="ECO:0000318"/>
    <property type="project" value="GO_Central"/>
</dbReference>
<dbReference type="GO" id="GO:0006865">
    <property type="term" value="P:amino acid transport"/>
    <property type="evidence" value="ECO:0007669"/>
    <property type="project" value="UniProtKB-KW"/>
</dbReference>
<dbReference type="CDD" id="cd13703">
    <property type="entry name" value="PBP2_HisJ_LAO"/>
    <property type="match status" value="1"/>
</dbReference>
<dbReference type="FunFam" id="3.40.190.10:FF:000245">
    <property type="entry name" value="ABC transporter substrate-binding protein"/>
    <property type="match status" value="1"/>
</dbReference>
<dbReference type="Gene3D" id="3.40.190.10">
    <property type="entry name" value="Periplasmic binding protein-like II"/>
    <property type="match status" value="2"/>
</dbReference>
<dbReference type="InterPro" id="IPR005768">
    <property type="entry name" value="Lys_Arg_Orn-bd"/>
</dbReference>
<dbReference type="InterPro" id="IPR018313">
    <property type="entry name" value="SBP_3_CS"/>
</dbReference>
<dbReference type="InterPro" id="IPR001638">
    <property type="entry name" value="Solute-binding_3/MltF_N"/>
</dbReference>
<dbReference type="NCBIfam" id="TIGR01096">
    <property type="entry name" value="3A0103s03R"/>
    <property type="match status" value="1"/>
</dbReference>
<dbReference type="PANTHER" id="PTHR35936:SF17">
    <property type="entry name" value="ARGININE-BINDING EXTRACELLULAR PROTEIN ARTP"/>
    <property type="match status" value="1"/>
</dbReference>
<dbReference type="PANTHER" id="PTHR35936">
    <property type="entry name" value="MEMBRANE-BOUND LYTIC MUREIN TRANSGLYCOSYLASE F"/>
    <property type="match status" value="1"/>
</dbReference>
<dbReference type="Pfam" id="PF00497">
    <property type="entry name" value="SBP_bac_3"/>
    <property type="match status" value="1"/>
</dbReference>
<dbReference type="SMART" id="SM00062">
    <property type="entry name" value="PBPb"/>
    <property type="match status" value="1"/>
</dbReference>
<dbReference type="SUPFAM" id="SSF53850">
    <property type="entry name" value="Periplasmic binding protein-like II"/>
    <property type="match status" value="1"/>
</dbReference>
<dbReference type="PROSITE" id="PS01039">
    <property type="entry name" value="SBP_BACTERIAL_3"/>
    <property type="match status" value="1"/>
</dbReference>
<evidence type="ECO:0000255" key="1"/>
<evidence type="ECO:0000269" key="2">
    <source>
    </source>
</evidence>
<evidence type="ECO:0000269" key="3">
    <source>
    </source>
</evidence>
<evidence type="ECO:0000269" key="4">
    <source>
    </source>
</evidence>
<evidence type="ECO:0000303" key="5">
    <source>
    </source>
</evidence>
<evidence type="ECO:0000305" key="6"/>
<evidence type="ECO:0000312" key="7">
    <source>
        <dbReference type="EMBL" id="AAG04277.1"/>
    </source>
</evidence>
<keyword id="KW-0029">Amino-acid transport</keyword>
<keyword id="KW-0574">Periplasm</keyword>
<keyword id="KW-1185">Reference proteome</keyword>
<keyword id="KW-0732">Signal</keyword>
<keyword id="KW-0813">Transport</keyword>
<organism>
    <name type="scientific">Pseudomonas aeruginosa (strain ATCC 15692 / DSM 22644 / CIP 104116 / JCM 14847 / LMG 12228 / 1C / PRS 101 / PAO1)</name>
    <dbReference type="NCBI Taxonomy" id="208964"/>
    <lineage>
        <taxon>Bacteria</taxon>
        <taxon>Pseudomonadati</taxon>
        <taxon>Pseudomonadota</taxon>
        <taxon>Gammaproteobacteria</taxon>
        <taxon>Pseudomonadales</taxon>
        <taxon>Pseudomonadaceae</taxon>
        <taxon>Pseudomonas</taxon>
    </lineage>
</organism>
<sequence>MKKLALLGALALSVLSLPTFAADKPVRIGIEAAYPPFSLKTPDGQLAGFDVDIGNALCEEMKVQCKWVEQEFDGLIPALKVRKIDAILSSMTITDERKRSVDFTNKYYNTPARFVMKEGASLNDPKADLKGKKAGVLRGSTADRYASAELTPAGVEVVRYNSQQEANMDLVAGRLDAVVADSVNLEDGFLKTDAGKGYAFVGPQLTDAKYFGEGVGIAVRKGDSELAGKFNAAIDALRANGKYKQIQDKYFSFDVYGSN</sequence>
<protein>
    <recommendedName>
        <fullName evidence="6">L-arginine-binding protein</fullName>
    </recommendedName>
</protein>
<feature type="signal peptide" evidence="1">
    <location>
        <begin position="1"/>
        <end position="21"/>
    </location>
</feature>
<feature type="chain" id="PRO_5003459634" description="L-arginine-binding protein" evidence="1">
    <location>
        <begin position="22"/>
        <end position="259"/>
    </location>
</feature>
<name>ARGBP_PSEAE</name>
<accession>G3XD47</accession>
<gene>
    <name evidence="5" type="primary">aotJ</name>
    <name evidence="7" type="ordered locus">PA0888</name>
</gene>
<reference key="1">
    <citation type="journal article" date="2000" name="Nature">
        <title>Complete genome sequence of Pseudomonas aeruginosa PAO1, an opportunistic pathogen.</title>
        <authorList>
            <person name="Stover C.K."/>
            <person name="Pham X.-Q.T."/>
            <person name="Erwin A.L."/>
            <person name="Mizoguchi S.D."/>
            <person name="Warrener P."/>
            <person name="Hickey M.J."/>
            <person name="Brinkman F.S.L."/>
            <person name="Hufnagle W.O."/>
            <person name="Kowalik D.J."/>
            <person name="Lagrou M."/>
            <person name="Garber R.L."/>
            <person name="Goltry L."/>
            <person name="Tolentino E."/>
            <person name="Westbrock-Wadman S."/>
            <person name="Yuan Y."/>
            <person name="Brody L.L."/>
            <person name="Coulter S.N."/>
            <person name="Folger K.R."/>
            <person name="Kas A."/>
            <person name="Larbig K."/>
            <person name="Lim R.M."/>
            <person name="Smith K.A."/>
            <person name="Spencer D.H."/>
            <person name="Wong G.K.-S."/>
            <person name="Wu Z."/>
            <person name="Paulsen I.T."/>
            <person name="Reizer J."/>
            <person name="Saier M.H. Jr."/>
            <person name="Hancock R.E.W."/>
            <person name="Lory S."/>
            <person name="Olson M.V."/>
        </authorList>
    </citation>
    <scope>NUCLEOTIDE SEQUENCE [LARGE SCALE GENOMIC DNA]</scope>
    <source>
        <strain>ATCC 15692 / DSM 22644 / CIP 104116 / JCM 14847 / LMG 12228 / 1C / PRS 101 / PAO1</strain>
    </source>
</reference>
<reference key="2">
    <citation type="journal article" date="1998" name="J. Bacteriol.">
        <title>Molecular characterization and regulation of an operon encoding a system for transport of arginine and ornithine and the ArgR regulatory protein in Pseudomonas aeruginosa.</title>
        <authorList>
            <person name="Nishijyo T."/>
            <person name="Park S.-M."/>
            <person name="Lu C.-D."/>
            <person name="Itoh Y."/>
            <person name="Abdelal A.T."/>
        </authorList>
    </citation>
    <scope>OPERON STRUCTURE</scope>
    <scope>INDUCTION</scope>
    <scope>DISRUPTION PHENOTYPE</scope>
    <source>
        <strain>ATCC 15692 / DSM 22644 / CIP 104116 / JCM 14847 / LMG 12228 / 1C / PRS 101 / PAO1</strain>
    </source>
</reference>
<reference key="3">
    <citation type="journal article" date="2008" name="PLoS Genet.">
        <title>High-throughput phenotypic characterization of Pseudomonas aeruginosa membrane transport genes.</title>
        <authorList>
            <person name="Johnson D.A."/>
            <person name="Tetu S.G."/>
            <person name="Phillippy K."/>
            <person name="Chen J."/>
            <person name="Ren Q."/>
            <person name="Paulsen I.T."/>
        </authorList>
    </citation>
    <scope>DISRUPTION PHENOTYPE</scope>
    <source>
        <strain>ATCC 15692 / DSM 22644 / CIP 104116 / JCM 14847 / LMG 12228 / 1C / PRS 101 / PAO1</strain>
        <strain>PAK</strain>
    </source>
</reference>
<reference key="4">
    <citation type="journal article" date="2019" name="Int. J. Mol. Sci.">
        <title>Determination of Ligand Profiles for Pseudomonas aeruginosa Solute Binding Proteins.</title>
        <authorList>
            <person name="Fernandez M."/>
            <person name="Rico-Jimenez M."/>
            <person name="Ortega A."/>
            <person name="Daddaoua A."/>
            <person name="Garcia Garcia A.I."/>
            <person name="Martin-Mora D."/>
            <person name="Torres N.M."/>
            <person name="Tajuelo A."/>
            <person name="Matilla M.A."/>
            <person name="Krell T."/>
        </authorList>
    </citation>
    <scope>FUNCTION AS A BINDING PROTEIN</scope>
    <source>
        <strain>ATCC 15692 / DSM 22644 / CIP 104116 / JCM 14847 / LMG 12228 / 1C / PRS 101 / PAO1</strain>
    </source>
</reference>
<proteinExistence type="evidence at protein level"/>